<accession>Q91HK5</accession>
<comment type="function">
    <molecule>Protein 2A</molecule>
    <text evidence="1">Implicated in RNA2 replication. Could also be required for nematode transmission of the virus (By similarity).</text>
</comment>
<comment type="function">
    <molecule>Movement protein</molecule>
    <text evidence="1">Transports viral genome to neighboring plant cells directly through plasmosdesmata, without any budding. The movement protein allows efficient cell to cell propagation, by bypassing the host cell wall barrier. Acts by forming a tubular structure at the host plasmodesmata, enlarging it enough to allow free passage of virion capsids (By similarity).</text>
</comment>
<comment type="subcellular location">
    <subcellularLocation>
        <location>Host cell junction</location>
        <location>Host plasmodesma</location>
    </subcellularLocation>
    <text evidence="1">Assembles in tubules that are embedded within modified plasmodesmata (By similarity). Movement proteins are targeted preferentially to calreticulin-labeled foci within the youngest cross walls, where they assemble into tubules. During cell division, they colocalize in the cell plate with KNOLLE, a cytokinesis-specific syntaxin.</text>
</comment>
<comment type="subcellular location">
    <molecule>Protein 2A</molecule>
    <subcellularLocation>
        <location>Host cytoplasm</location>
    </subcellularLocation>
    <subcellularLocation>
        <location>Host nucleus</location>
    </subcellularLocation>
    <text>Cytoplasmic early in infection. Later in infection, it becomes progressively concentrated around the nucleus, where it forms large aggregates.</text>
</comment>
<comment type="subcellular location">
    <molecule>Coat protein</molecule>
    <subcellularLocation>
        <location evidence="2">Virion</location>
    </subcellularLocation>
</comment>
<comment type="PTM">
    <text evidence="1">Specific enzymatic cleavages in vivo by the P1 encoded 3C-like protease yield mature proteins.</text>
</comment>
<comment type="miscellaneous">
    <text>Virions are comprised of 60 copies of the coat protein.</text>
</comment>
<comment type="similarity">
    <text evidence="2">Belongs to the nepoviruses RNA2 polyprotein family.</text>
</comment>
<organismHost>
    <name type="scientific">Vitis vinifera</name>
    <name type="common">Grape</name>
    <dbReference type="NCBI Taxonomy" id="29760"/>
</organismHost>
<reference key="1">
    <citation type="journal article" date="2001" name="Virus Res.">
        <title>Complete nucleotide sequences of the RNAs 2 of German isolates of Grapevine fanleaf and Arabis mosaic nepoviruses.</title>
        <authorList>
            <person name="Wetzel T."/>
            <person name="Meunier L."/>
            <person name="Jaeger U."/>
            <person name="Reustle G.M."/>
            <person name="Krczal G."/>
        </authorList>
    </citation>
    <scope>NUCLEOTIDE SEQUENCE [GENOMIC RNA]</scope>
</reference>
<dbReference type="EMBL" id="AY017338">
    <property type="protein sequence ID" value="AAK07727.1"/>
    <property type="molecule type" value="Genomic_RNA"/>
</dbReference>
<dbReference type="SMR" id="Q91HK5"/>
<dbReference type="GO" id="GO:0030430">
    <property type="term" value="C:host cell cytoplasm"/>
    <property type="evidence" value="ECO:0007669"/>
    <property type="project" value="UniProtKB-SubCell"/>
</dbReference>
<dbReference type="GO" id="GO:0042025">
    <property type="term" value="C:host cell nucleus"/>
    <property type="evidence" value="ECO:0007669"/>
    <property type="project" value="UniProtKB-SubCell"/>
</dbReference>
<dbReference type="GO" id="GO:0044219">
    <property type="term" value="C:host cell plasmodesma"/>
    <property type="evidence" value="ECO:0007669"/>
    <property type="project" value="UniProtKB-SubCell"/>
</dbReference>
<dbReference type="GO" id="GO:0019028">
    <property type="term" value="C:viral capsid"/>
    <property type="evidence" value="ECO:0007669"/>
    <property type="project" value="UniProtKB-KW"/>
</dbReference>
<dbReference type="GO" id="GO:0005198">
    <property type="term" value="F:structural molecule activity"/>
    <property type="evidence" value="ECO:0007669"/>
    <property type="project" value="InterPro"/>
</dbReference>
<dbReference type="GO" id="GO:0046740">
    <property type="term" value="P:transport of virus in host, cell to cell"/>
    <property type="evidence" value="ECO:0007669"/>
    <property type="project" value="UniProtKB-KW"/>
</dbReference>
<dbReference type="Gene3D" id="2.60.120.20">
    <property type="match status" value="2"/>
</dbReference>
<dbReference type="InterPro" id="IPR005054">
    <property type="entry name" value="Nepo_coat"/>
</dbReference>
<dbReference type="InterPro" id="IPR005305">
    <property type="entry name" value="Nepo_coat_C"/>
</dbReference>
<dbReference type="InterPro" id="IPR005306">
    <property type="entry name" value="Nepo_coat_N"/>
</dbReference>
<dbReference type="InterPro" id="IPR021081">
    <property type="entry name" value="Nepovirus_subgr_A_2A"/>
</dbReference>
<dbReference type="InterPro" id="IPR029053">
    <property type="entry name" value="Viral_coat"/>
</dbReference>
<dbReference type="Pfam" id="PF12312">
    <property type="entry name" value="NeA_P2"/>
    <property type="match status" value="1"/>
</dbReference>
<dbReference type="Pfam" id="PF03391">
    <property type="entry name" value="Nepo_coat"/>
    <property type="match status" value="1"/>
</dbReference>
<dbReference type="Pfam" id="PF03688">
    <property type="entry name" value="Nepo_coat_C"/>
    <property type="match status" value="1"/>
</dbReference>
<dbReference type="Pfam" id="PF03689">
    <property type="entry name" value="Nepo_coat_N"/>
    <property type="match status" value="1"/>
</dbReference>
<dbReference type="SUPFAM" id="SSF88633">
    <property type="entry name" value="Positive stranded ssRNA viruses"/>
    <property type="match status" value="3"/>
</dbReference>
<evidence type="ECO:0000250" key="1"/>
<evidence type="ECO:0000305" key="2"/>
<proteinExistence type="inferred from homology"/>
<protein>
    <recommendedName>
        <fullName>RNA2 polyprotein</fullName>
    </recommendedName>
    <alternativeName>
        <fullName>P2</fullName>
    </alternativeName>
    <component>
        <recommendedName>
            <fullName>Protein 2A</fullName>
            <shortName>P2A</shortName>
        </recommendedName>
    </component>
    <component>
        <recommendedName>
            <fullName>Movement protein</fullName>
        </recommendedName>
        <alternativeName>
            <fullName>2B-MP</fullName>
        </alternativeName>
    </component>
    <component>
        <recommendedName>
            <fullName>Coat protein</fullName>
        </recommendedName>
        <alternativeName>
            <fullName>2C-CP</fullName>
        </alternativeName>
    </component>
</protein>
<sequence>MGKFYYSNRRLACWAAGKNPHLGGSVEQWLAAINTDSSFRQTVKEDVQDNREQPTAIRMFSWKVGFGPIDNPEKCDWHFVLTGERPAQPTRPVKADEVVVVPQLKKVVIPSPPPPPAVYFRAVGAFAPTRSGFIRATVERLSREREESRAAALFAELPLEYPQGAPLKLSLAMKFAMLKHTTWRKWYDTSDERLSEAHPGGPCLPPPPPIQNPPFFQERVREFCRMKSCARAFALETSLGLNRAWVGLVDIPSTSVCCADGRTTGGQTIAQEADPLQHRVSTSVAPGRAQWISERRQALRRREQANSLQGLAAQTDMTFEQARNAYLGAADMIEQGLPLLPPLRSAYAPRGLWRGPSTRANYTLDFRLNGIPTGTNTLEILYNPVSEEEMEEYRDRGMSAVVIDALEIAINPFGMPGNPTDLTVVATYGHERDMTRAFIGSASTFLGNGLARAIFFPGLQYSQEEPRRESIIRLYVASTNATVDTDSVLAAISVGTLRQHVGSMHYRTVASTVHQAQVQGTTLRATMMGNTVVVSPEGSLVTGTPEARVEIGGGSSIRMVGPLQWESVEEPGQTFSIRSRSRSVRIDRNVDLPQLEAEPRLSSTVRGLAGRGVVYIPKDCQANRYLGTLNIRDMISDFKGVQYEKWITAGLVMPTFKIVIRLPANAFTGLTWVMSFDAYNRITSRITTSADPVYTLSVPHWLIHHKLGTFSCEIDYGELCGHAMWFKSTTFESPKLHFTCLTGNNKELAADWQAVVELYAELEEASSFLGKPTLVFDPGVFNGKFQFLTCPPIFFDLTAVTALKSAGLTLGQVPMVGTTKVYNLNSALVSCVLGMGGTIRGRVHICAPIFYSIVLWVVSEWNGTTMDWNELFKYPGVYVEEDGSFEVKIRSPYHRTPARLLAGQSQRDMSSLNFYAIAGPIAPSGETARLPIVVQIDEIVRPDLALPSFEDDYFVWVDFSEFTLDKEELEIGSRFFDFTSSTCRVIMGENPFAAMIACHGLHSGVLDLKLQWSLNTDFGKSSGSVTVTKLVGDKATGLDGPSQVFAIQKLEGVTDLLIGNFAGANPNTHFSLYSRWMAIKLDQAKSIKVLRVLCKPRPGFSFYGRTSFPV</sequence>
<keyword id="KW-0167">Capsid protein</keyword>
<keyword id="KW-1031">Host cell junction</keyword>
<keyword id="KW-1035">Host cytoplasm</keyword>
<keyword id="KW-1048">Host nucleus</keyword>
<keyword id="KW-0813">Transport</keyword>
<keyword id="KW-0916">Viral movement protein</keyword>
<keyword id="KW-0946">Virion</keyword>
<feature type="chain" id="PRO_0000037103" description="Protein 2A" evidence="1">
    <location>
        <begin position="1"/>
        <end position="258"/>
    </location>
</feature>
<feature type="chain" id="PRO_0000037104" description="Movement protein" evidence="1">
    <location>
        <begin position="259"/>
        <end position="606"/>
    </location>
</feature>
<feature type="chain" id="PRO_0000037105" description="Coat protein" evidence="1">
    <location>
        <begin position="607"/>
        <end position="1110"/>
    </location>
</feature>
<name>POL2_GFLVN</name>
<organism>
    <name type="scientific">Grapevine fanleaf virus (isolate NW)</name>
    <name type="common">GFLV</name>
    <dbReference type="NCBI Taxonomy" id="282370"/>
    <lineage>
        <taxon>Viruses</taxon>
        <taxon>Riboviria</taxon>
        <taxon>Orthornavirae</taxon>
        <taxon>Pisuviricota</taxon>
        <taxon>Pisoniviricetes</taxon>
        <taxon>Picornavirales</taxon>
        <taxon>Secoviridae</taxon>
        <taxon>Comovirinae</taxon>
        <taxon>Nepovirus</taxon>
        <taxon>Nepovirus foliumflabelli</taxon>
    </lineage>
</organism>